<comment type="subcellular location">
    <subcellularLocation>
        <location evidence="2">Membrane</location>
        <topology evidence="2">Multi-pass membrane protein</topology>
    </subcellularLocation>
</comment>
<name>TM276_MOUSE</name>
<accession>P0DW86</accession>
<accession>Q6P6J7</accession>
<accession>Q6ZQA2</accession>
<accession>Q9D134</accession>
<accession>Q9QXA1</accession>
<gene>
    <name evidence="1" type="primary">Tmem276</name>
</gene>
<dbReference type="EMBL" id="AK004009">
    <property type="protein sequence ID" value="BAB23122.1"/>
    <property type="molecule type" value="mRNA"/>
</dbReference>
<dbReference type="EMBL" id="AC156550">
    <property type="status" value="NOT_ANNOTATED_CDS"/>
    <property type="molecule type" value="Genomic_DNA"/>
</dbReference>
<dbReference type="EMBL" id="BC016196">
    <property type="protein sequence ID" value="AAH16196.1"/>
    <property type="molecule type" value="mRNA"/>
</dbReference>
<dbReference type="EMBL" id="BC025112">
    <property type="protein sequence ID" value="AAH25112.1"/>
    <property type="molecule type" value="mRNA"/>
</dbReference>
<dbReference type="CCDS" id="CCDS27582.1"/>
<dbReference type="RefSeq" id="NP_001263251.1">
    <property type="nucleotide sequence ID" value="NM_001276322.2"/>
</dbReference>
<dbReference type="RefSeq" id="NP_001263262.1">
    <property type="nucleotide sequence ID" value="NM_001276333.2"/>
</dbReference>
<dbReference type="RefSeq" id="NP_001263263.1">
    <property type="nucleotide sequence ID" value="NM_001276334.2"/>
</dbReference>
<dbReference type="RefSeq" id="NP_001263264.1">
    <property type="nucleotide sequence ID" value="NM_001276335.2"/>
</dbReference>
<dbReference type="RefSeq" id="NP_001394995.1">
    <property type="nucleotide sequence ID" value="NM_001408066.1"/>
</dbReference>
<dbReference type="RefSeq" id="NP_001394996.1">
    <property type="nucleotide sequence ID" value="NM_001408067.1"/>
</dbReference>
<dbReference type="RefSeq" id="NP_001394997.1">
    <property type="nucleotide sequence ID" value="NM_001408068.1"/>
</dbReference>
<dbReference type="RefSeq" id="NP_001394998.1">
    <property type="nucleotide sequence ID" value="NM_001408069.1"/>
</dbReference>
<dbReference type="RefSeq" id="NP_001394999.1">
    <property type="nucleotide sequence ID" value="NM_001408070.1"/>
</dbReference>
<dbReference type="RefSeq" id="NP_851293.1">
    <property type="nucleotide sequence ID" value="NM_180962.3"/>
</dbReference>
<dbReference type="FunCoup" id="P0DW86">
    <property type="interactions" value="562"/>
</dbReference>
<dbReference type="PhosphoSitePlus" id="P0DW86"/>
<dbReference type="Ensembl" id="ENSMUST00000066677.10">
    <property type="protein sequence ID" value="ENSMUSP00000063317.9"/>
    <property type="gene ID" value="ENSMUSG00000121584.1"/>
</dbReference>
<dbReference type="Ensembl" id="ENSMUST00000177359.2">
    <property type="protein sequence ID" value="ENSMUSP00000135505.2"/>
    <property type="gene ID" value="ENSMUSG00000121584.1"/>
</dbReference>
<dbReference type="Ensembl" id="ENSMUST00000231152.2">
    <property type="protein sequence ID" value="ENSMUSP00000155579.2"/>
    <property type="gene ID" value="ENSMUSG00000121584.1"/>
</dbReference>
<dbReference type="GeneID" id="125480935"/>
<dbReference type="KEGG" id="mmu:125480935"/>
<dbReference type="KEGG" id="mmu:125488414"/>
<dbReference type="CTD" id="84773"/>
<dbReference type="GeneTree" id="ENSGT00510000049727"/>
<dbReference type="PRO" id="PR:P0DW86"/>
<dbReference type="Proteomes" id="UP000000589">
    <property type="component" value="Chromosome 15"/>
</dbReference>
<dbReference type="GO" id="GO:0016020">
    <property type="term" value="C:membrane"/>
    <property type="evidence" value="ECO:0007669"/>
    <property type="project" value="UniProtKB-SubCell"/>
</dbReference>
<reference key="1">
    <citation type="journal article" date="2005" name="Science">
        <title>The transcriptional landscape of the mammalian genome.</title>
        <authorList>
            <person name="Carninci P."/>
            <person name="Kasukawa T."/>
            <person name="Katayama S."/>
            <person name="Gough J."/>
            <person name="Frith M.C."/>
            <person name="Maeda N."/>
            <person name="Oyama R."/>
            <person name="Ravasi T."/>
            <person name="Lenhard B."/>
            <person name="Wells C."/>
            <person name="Kodzius R."/>
            <person name="Shimokawa K."/>
            <person name="Bajic V.B."/>
            <person name="Brenner S.E."/>
            <person name="Batalov S."/>
            <person name="Forrest A.R."/>
            <person name="Zavolan M."/>
            <person name="Davis M.J."/>
            <person name="Wilming L.G."/>
            <person name="Aidinis V."/>
            <person name="Allen J.E."/>
            <person name="Ambesi-Impiombato A."/>
            <person name="Apweiler R."/>
            <person name="Aturaliya R.N."/>
            <person name="Bailey T.L."/>
            <person name="Bansal M."/>
            <person name="Baxter L."/>
            <person name="Beisel K.W."/>
            <person name="Bersano T."/>
            <person name="Bono H."/>
            <person name="Chalk A.M."/>
            <person name="Chiu K.P."/>
            <person name="Choudhary V."/>
            <person name="Christoffels A."/>
            <person name="Clutterbuck D.R."/>
            <person name="Crowe M.L."/>
            <person name="Dalla E."/>
            <person name="Dalrymple B.P."/>
            <person name="de Bono B."/>
            <person name="Della Gatta G."/>
            <person name="di Bernardo D."/>
            <person name="Down T."/>
            <person name="Engstrom P."/>
            <person name="Fagiolini M."/>
            <person name="Faulkner G."/>
            <person name="Fletcher C.F."/>
            <person name="Fukushima T."/>
            <person name="Furuno M."/>
            <person name="Futaki S."/>
            <person name="Gariboldi M."/>
            <person name="Georgii-Hemming P."/>
            <person name="Gingeras T.R."/>
            <person name="Gojobori T."/>
            <person name="Green R.E."/>
            <person name="Gustincich S."/>
            <person name="Harbers M."/>
            <person name="Hayashi Y."/>
            <person name="Hensch T.K."/>
            <person name="Hirokawa N."/>
            <person name="Hill D."/>
            <person name="Huminiecki L."/>
            <person name="Iacono M."/>
            <person name="Ikeo K."/>
            <person name="Iwama A."/>
            <person name="Ishikawa T."/>
            <person name="Jakt M."/>
            <person name="Kanapin A."/>
            <person name="Katoh M."/>
            <person name="Kawasawa Y."/>
            <person name="Kelso J."/>
            <person name="Kitamura H."/>
            <person name="Kitano H."/>
            <person name="Kollias G."/>
            <person name="Krishnan S.P."/>
            <person name="Kruger A."/>
            <person name="Kummerfeld S.K."/>
            <person name="Kurochkin I.V."/>
            <person name="Lareau L.F."/>
            <person name="Lazarevic D."/>
            <person name="Lipovich L."/>
            <person name="Liu J."/>
            <person name="Liuni S."/>
            <person name="McWilliam S."/>
            <person name="Madan Babu M."/>
            <person name="Madera M."/>
            <person name="Marchionni L."/>
            <person name="Matsuda H."/>
            <person name="Matsuzawa S."/>
            <person name="Miki H."/>
            <person name="Mignone F."/>
            <person name="Miyake S."/>
            <person name="Morris K."/>
            <person name="Mottagui-Tabar S."/>
            <person name="Mulder N."/>
            <person name="Nakano N."/>
            <person name="Nakauchi H."/>
            <person name="Ng P."/>
            <person name="Nilsson R."/>
            <person name="Nishiguchi S."/>
            <person name="Nishikawa S."/>
            <person name="Nori F."/>
            <person name="Ohara O."/>
            <person name="Okazaki Y."/>
            <person name="Orlando V."/>
            <person name="Pang K.C."/>
            <person name="Pavan W.J."/>
            <person name="Pavesi G."/>
            <person name="Pesole G."/>
            <person name="Petrovsky N."/>
            <person name="Piazza S."/>
            <person name="Reed J."/>
            <person name="Reid J.F."/>
            <person name="Ring B.Z."/>
            <person name="Ringwald M."/>
            <person name="Rost B."/>
            <person name="Ruan Y."/>
            <person name="Salzberg S.L."/>
            <person name="Sandelin A."/>
            <person name="Schneider C."/>
            <person name="Schoenbach C."/>
            <person name="Sekiguchi K."/>
            <person name="Semple C.A."/>
            <person name="Seno S."/>
            <person name="Sessa L."/>
            <person name="Sheng Y."/>
            <person name="Shibata Y."/>
            <person name="Shimada H."/>
            <person name="Shimada K."/>
            <person name="Silva D."/>
            <person name="Sinclair B."/>
            <person name="Sperling S."/>
            <person name="Stupka E."/>
            <person name="Sugiura K."/>
            <person name="Sultana R."/>
            <person name="Takenaka Y."/>
            <person name="Taki K."/>
            <person name="Tammoja K."/>
            <person name="Tan S.L."/>
            <person name="Tang S."/>
            <person name="Taylor M.S."/>
            <person name="Tegner J."/>
            <person name="Teichmann S.A."/>
            <person name="Ueda H.R."/>
            <person name="van Nimwegen E."/>
            <person name="Verardo R."/>
            <person name="Wei C.L."/>
            <person name="Yagi K."/>
            <person name="Yamanishi H."/>
            <person name="Zabarovsky E."/>
            <person name="Zhu S."/>
            <person name="Zimmer A."/>
            <person name="Hide W."/>
            <person name="Bult C."/>
            <person name="Grimmond S.M."/>
            <person name="Teasdale R.D."/>
            <person name="Liu E.T."/>
            <person name="Brusic V."/>
            <person name="Quackenbush J."/>
            <person name="Wahlestedt C."/>
            <person name="Mattick J.S."/>
            <person name="Hume D.A."/>
            <person name="Kai C."/>
            <person name="Sasaki D."/>
            <person name="Tomaru Y."/>
            <person name="Fukuda S."/>
            <person name="Kanamori-Katayama M."/>
            <person name="Suzuki M."/>
            <person name="Aoki J."/>
            <person name="Arakawa T."/>
            <person name="Iida J."/>
            <person name="Imamura K."/>
            <person name="Itoh M."/>
            <person name="Kato T."/>
            <person name="Kawaji H."/>
            <person name="Kawagashira N."/>
            <person name="Kawashima T."/>
            <person name="Kojima M."/>
            <person name="Kondo S."/>
            <person name="Konno H."/>
            <person name="Nakano K."/>
            <person name="Ninomiya N."/>
            <person name="Nishio T."/>
            <person name="Okada M."/>
            <person name="Plessy C."/>
            <person name="Shibata K."/>
            <person name="Shiraki T."/>
            <person name="Suzuki S."/>
            <person name="Tagami M."/>
            <person name="Waki K."/>
            <person name="Watahiki A."/>
            <person name="Okamura-Oho Y."/>
            <person name="Suzuki H."/>
            <person name="Kawai J."/>
            <person name="Hayashizaki Y."/>
        </authorList>
    </citation>
    <scope>NUCLEOTIDE SEQUENCE [LARGE SCALE MRNA]</scope>
</reference>
<reference key="2">
    <citation type="journal article" date="2009" name="PLoS Biol.">
        <title>Lineage-specific biology revealed by a finished genome assembly of the mouse.</title>
        <authorList>
            <person name="Church D.M."/>
            <person name="Goodstadt L."/>
            <person name="Hillier L.W."/>
            <person name="Zody M.C."/>
            <person name="Goldstein S."/>
            <person name="She X."/>
            <person name="Bult C.J."/>
            <person name="Agarwala R."/>
            <person name="Cherry J.L."/>
            <person name="DiCuccio M."/>
            <person name="Hlavina W."/>
            <person name="Kapustin Y."/>
            <person name="Meric P."/>
            <person name="Maglott D."/>
            <person name="Birtle Z."/>
            <person name="Marques A.C."/>
            <person name="Graves T."/>
            <person name="Zhou S."/>
            <person name="Teague B."/>
            <person name="Potamousis K."/>
            <person name="Churas C."/>
            <person name="Place M."/>
            <person name="Herschleb J."/>
            <person name="Runnheim R."/>
            <person name="Forrest D."/>
            <person name="Amos-Landgraf J."/>
            <person name="Schwartz D.C."/>
            <person name="Cheng Z."/>
            <person name="Lindblad-Toh K."/>
            <person name="Eichler E.E."/>
            <person name="Ponting C.P."/>
        </authorList>
    </citation>
    <scope>NUCLEOTIDE SEQUENCE [LARGE SCALE GENOMIC DNA]</scope>
    <source>
        <strain>C57BL/6J</strain>
    </source>
</reference>
<reference key="3">
    <citation type="journal article" date="2004" name="Genome Res.">
        <title>The status, quality, and expansion of the NIH full-length cDNA project: the Mammalian Gene Collection (MGC).</title>
        <authorList>
            <consortium name="The MGC Project Team"/>
        </authorList>
    </citation>
    <scope>NUCLEOTIDE SEQUENCE [LARGE SCALE MRNA]</scope>
</reference>
<feature type="signal peptide" evidence="2">
    <location>
        <begin position="1"/>
        <end position="32"/>
    </location>
</feature>
<feature type="chain" id="PRO_0000456484" description="Transmembrane protein 276" evidence="2">
    <location>
        <begin position="33"/>
        <end position="192"/>
    </location>
</feature>
<feature type="transmembrane region" description="Helical" evidence="2">
    <location>
        <begin position="35"/>
        <end position="55"/>
    </location>
</feature>
<feature type="transmembrane region" description="Helical" evidence="2">
    <location>
        <begin position="63"/>
        <end position="83"/>
    </location>
</feature>
<feature type="transmembrane region" description="Helical" evidence="2">
    <location>
        <begin position="92"/>
        <end position="112"/>
    </location>
</feature>
<feature type="transmembrane region" description="Helical" evidence="2">
    <location>
        <begin position="114"/>
        <end position="134"/>
    </location>
</feature>
<organism>
    <name type="scientific">Mus musculus</name>
    <name type="common">Mouse</name>
    <dbReference type="NCBI Taxonomy" id="10090"/>
    <lineage>
        <taxon>Eukaryota</taxon>
        <taxon>Metazoa</taxon>
        <taxon>Chordata</taxon>
        <taxon>Craniata</taxon>
        <taxon>Vertebrata</taxon>
        <taxon>Euteleostomi</taxon>
        <taxon>Mammalia</taxon>
        <taxon>Eutheria</taxon>
        <taxon>Euarchontoglires</taxon>
        <taxon>Glires</taxon>
        <taxon>Rodentia</taxon>
        <taxon>Myomorpha</taxon>
        <taxon>Muroidea</taxon>
        <taxon>Muridae</taxon>
        <taxon>Murinae</taxon>
        <taxon>Mus</taxon>
        <taxon>Mus</taxon>
    </lineage>
</organism>
<proteinExistence type="evidence at transcript level"/>
<sequence>MVSKPRTEWSTVLSHLVLAGVSLHAAVSSVQSSRGAAAGFLLQTFAAIIMLAPGPSTHEDCLAGAWVATVIGLPLLAFDFHWVNGDRSSANLLLGGGMVLAVAGDHLGPEGCSVAGQAVLLVVAVTILIVAVFTANTYGMWGGTLLGVAGLLSRLEEDRLLLLPKEDVCRWALAAGSWAYCRALHTQRLQWE</sequence>
<keyword id="KW-0472">Membrane</keyword>
<keyword id="KW-1185">Reference proteome</keyword>
<keyword id="KW-0732">Signal</keyword>
<keyword id="KW-0812">Transmembrane</keyword>
<keyword id="KW-1133">Transmembrane helix</keyword>
<evidence type="ECO:0000250" key="1">
    <source>
        <dbReference type="UniProtKB" id="P0DTL5"/>
    </source>
</evidence>
<evidence type="ECO:0000255" key="2"/>
<protein>
    <recommendedName>
        <fullName evidence="1">Transmembrane protein 276</fullName>
    </recommendedName>
</protein>